<organism>
    <name type="scientific">Escherichia coli (strain K12)</name>
    <dbReference type="NCBI Taxonomy" id="83333"/>
    <lineage>
        <taxon>Bacteria</taxon>
        <taxon>Pseudomonadati</taxon>
        <taxon>Pseudomonadota</taxon>
        <taxon>Gammaproteobacteria</taxon>
        <taxon>Enterobacterales</taxon>
        <taxon>Enterobacteriaceae</taxon>
        <taxon>Escherichia</taxon>
    </lineage>
</organism>
<protein>
    <recommendedName>
        <fullName>Probable acetyl-CoA acetyltransferase</fullName>
        <ecNumber>2.3.1.9</ecNumber>
    </recommendedName>
    <alternativeName>
        <fullName>Acetoacetyl-CoA thiolase</fullName>
    </alternativeName>
</protein>
<sequence>MKDVVIVGALRTPIGCFRGALAGHSAVELGSLVVKALIERTGVPAYAVDEVILGQVLTAGAGQNPARQSAIKGGLPNSVSAITINDVCGSGLKALHLATQAIQCGEADIVIAGGQENMSRAPHVLTDSRTGAQLGNSQLVDSLVHDGLWDAFNDYHIGVTAENLAREYGISRQLQDAYALSSQQKARAAIDAGRFKDEIVPVMTQSNGQTLVVDTDEQPRTDASAEGLARLNPSFDSLGSVTAGNASSINDGAAAVMMMSEAKARALNLPVLARIRAFASVGVDPALMGIAPVYATRRCLERVGWQLAEVDLIEANEAFAAQALSVGKMLEWDERRVNVNGGAIALGHPIGASGCRILVSLVHEMVKRNARKGLATLCIGGGQGVALTIERDE</sequence>
<proteinExistence type="inferred from homology"/>
<comment type="catalytic activity">
    <reaction evidence="2">
        <text>2 acetyl-CoA = acetoacetyl-CoA + CoA</text>
        <dbReference type="Rhea" id="RHEA:21036"/>
        <dbReference type="ChEBI" id="CHEBI:57286"/>
        <dbReference type="ChEBI" id="CHEBI:57287"/>
        <dbReference type="ChEBI" id="CHEBI:57288"/>
        <dbReference type="EC" id="2.3.1.9"/>
    </reaction>
</comment>
<comment type="subcellular location">
    <subcellularLocation>
        <location evidence="3">Cytoplasm</location>
    </subcellularLocation>
</comment>
<comment type="similarity">
    <text evidence="3">Belongs to the thiolase-like superfamily. Thiolase family.</text>
</comment>
<comment type="sequence caution" evidence="3">
    <conflict type="erroneous initiation">
        <sequence resource="EMBL-CDS" id="AAB40491"/>
    </conflict>
    <text>Extended N-terminus.</text>
</comment>
<reference key="1">
    <citation type="journal article" date="1997" name="Science">
        <title>The complete genome sequence of Escherichia coli K-12.</title>
        <authorList>
            <person name="Blattner F.R."/>
            <person name="Plunkett G. III"/>
            <person name="Bloch C.A."/>
            <person name="Perna N.T."/>
            <person name="Burland V."/>
            <person name="Riley M."/>
            <person name="Collado-Vides J."/>
            <person name="Glasner J.D."/>
            <person name="Rode C.K."/>
            <person name="Mayhew G.F."/>
            <person name="Gregor J."/>
            <person name="Davis N.W."/>
            <person name="Kirkpatrick H.A."/>
            <person name="Goeden M.A."/>
            <person name="Rose D.J."/>
            <person name="Mau B."/>
            <person name="Shao Y."/>
        </authorList>
    </citation>
    <scope>NUCLEOTIDE SEQUENCE [LARGE SCALE GENOMIC DNA]</scope>
    <source>
        <strain>K12 / MG1655 / ATCC 47076</strain>
    </source>
</reference>
<reference key="2">
    <citation type="journal article" date="2006" name="Mol. Syst. Biol.">
        <title>Highly accurate genome sequences of Escherichia coli K-12 strains MG1655 and W3110.</title>
        <authorList>
            <person name="Hayashi K."/>
            <person name="Morooka N."/>
            <person name="Yamamoto Y."/>
            <person name="Fujita K."/>
            <person name="Isono K."/>
            <person name="Choi S."/>
            <person name="Ohtsubo E."/>
            <person name="Baba T."/>
            <person name="Wanner B.L."/>
            <person name="Mori H."/>
            <person name="Horiuchi T."/>
        </authorList>
    </citation>
    <scope>NUCLEOTIDE SEQUENCE [LARGE SCALE GENOMIC DNA]</scope>
    <source>
        <strain>K12 / W3110 / ATCC 27325 / DSM 5911</strain>
    </source>
</reference>
<gene>
    <name type="primary">yqeF</name>
    <name type="ordered locus">b2844</name>
    <name type="ordered locus">JW5453</name>
</gene>
<accession>Q46939</accession>
<accession>Q2M9Z3</accession>
<feature type="chain" id="PRO_0000206456" description="Probable acetyl-CoA acetyltransferase">
    <location>
        <begin position="1"/>
        <end position="393"/>
    </location>
</feature>
<feature type="active site" description="Acyl-thioester intermediate" evidence="1">
    <location>
        <position position="88"/>
    </location>
</feature>
<feature type="active site" description="Proton acceptor" evidence="2">
    <location>
        <position position="348"/>
    </location>
</feature>
<feature type="active site" description="Proton acceptor" evidence="2">
    <location>
        <position position="378"/>
    </location>
</feature>
<evidence type="ECO:0000250" key="1"/>
<evidence type="ECO:0000255" key="2">
    <source>
        <dbReference type="PROSITE-ProRule" id="PRU10020"/>
    </source>
</evidence>
<evidence type="ECO:0000305" key="3"/>
<name>YQEF_ECOLI</name>
<keyword id="KW-0012">Acyltransferase</keyword>
<keyword id="KW-0963">Cytoplasm</keyword>
<keyword id="KW-1185">Reference proteome</keyword>
<keyword id="KW-0808">Transferase</keyword>
<dbReference type="EC" id="2.3.1.9"/>
<dbReference type="EMBL" id="U29581">
    <property type="protein sequence ID" value="AAB40491.1"/>
    <property type="status" value="ALT_INIT"/>
    <property type="molecule type" value="Genomic_DNA"/>
</dbReference>
<dbReference type="EMBL" id="U00096">
    <property type="protein sequence ID" value="AAC75883.2"/>
    <property type="molecule type" value="Genomic_DNA"/>
</dbReference>
<dbReference type="EMBL" id="AP009048">
    <property type="protein sequence ID" value="BAE76913.1"/>
    <property type="molecule type" value="Genomic_DNA"/>
</dbReference>
<dbReference type="PIR" id="E65067">
    <property type="entry name" value="E65067"/>
</dbReference>
<dbReference type="RefSeq" id="NP_417321.2">
    <property type="nucleotide sequence ID" value="NC_000913.3"/>
</dbReference>
<dbReference type="RefSeq" id="WP_000656030.1">
    <property type="nucleotide sequence ID" value="NZ_LN832404.1"/>
</dbReference>
<dbReference type="SMR" id="Q46939"/>
<dbReference type="BioGRID" id="4263512">
    <property type="interactions" value="12"/>
</dbReference>
<dbReference type="BioGRID" id="851651">
    <property type="interactions" value="1"/>
</dbReference>
<dbReference type="DIP" id="DIP-12853N"/>
<dbReference type="FunCoup" id="Q46939">
    <property type="interactions" value="815"/>
</dbReference>
<dbReference type="STRING" id="511145.b2844"/>
<dbReference type="jPOST" id="Q46939"/>
<dbReference type="PaxDb" id="511145-b2844"/>
<dbReference type="EnsemblBacteria" id="AAC75883">
    <property type="protein sequence ID" value="AAC75883"/>
    <property type="gene ID" value="b2844"/>
</dbReference>
<dbReference type="GeneID" id="947324"/>
<dbReference type="KEGG" id="ecj:JW5453"/>
<dbReference type="KEGG" id="eco:b2844"/>
<dbReference type="KEGG" id="ecoc:C3026_15615"/>
<dbReference type="PATRIC" id="fig|1411691.4.peg.3890"/>
<dbReference type="EchoBASE" id="EB2900"/>
<dbReference type="eggNOG" id="COG0183">
    <property type="taxonomic scope" value="Bacteria"/>
</dbReference>
<dbReference type="HOGENOM" id="CLU_031026_0_0_6"/>
<dbReference type="InParanoid" id="Q46939"/>
<dbReference type="OMA" id="ICPSIAI"/>
<dbReference type="OrthoDB" id="9764638at2"/>
<dbReference type="PhylomeDB" id="Q46939"/>
<dbReference type="BioCyc" id="EcoCyc:G7464-MONOMER"/>
<dbReference type="PRO" id="PR:Q46939"/>
<dbReference type="Proteomes" id="UP000000625">
    <property type="component" value="Chromosome"/>
</dbReference>
<dbReference type="GO" id="GO:0005737">
    <property type="term" value="C:cytoplasm"/>
    <property type="evidence" value="ECO:0007669"/>
    <property type="project" value="UniProtKB-SubCell"/>
</dbReference>
<dbReference type="GO" id="GO:0003985">
    <property type="term" value="F:acetyl-CoA C-acetyltransferase activity"/>
    <property type="evidence" value="ECO:0000318"/>
    <property type="project" value="GO_Central"/>
</dbReference>
<dbReference type="GO" id="GO:0003988">
    <property type="term" value="F:acetyl-CoA C-acyltransferase activity"/>
    <property type="evidence" value="ECO:0000315"/>
    <property type="project" value="EcoCyc"/>
</dbReference>
<dbReference type="GO" id="GO:0071271">
    <property type="term" value="P:1-butanol biosynthetic process"/>
    <property type="evidence" value="ECO:0000315"/>
    <property type="project" value="CACAO"/>
</dbReference>
<dbReference type="CDD" id="cd00751">
    <property type="entry name" value="thiolase"/>
    <property type="match status" value="1"/>
</dbReference>
<dbReference type="FunFam" id="3.40.47.10:FF:000010">
    <property type="entry name" value="Acetyl-CoA acetyltransferase (Thiolase)"/>
    <property type="match status" value="1"/>
</dbReference>
<dbReference type="Gene3D" id="3.40.47.10">
    <property type="match status" value="2"/>
</dbReference>
<dbReference type="InterPro" id="IPR002155">
    <property type="entry name" value="Thiolase"/>
</dbReference>
<dbReference type="InterPro" id="IPR016039">
    <property type="entry name" value="Thiolase-like"/>
</dbReference>
<dbReference type="InterPro" id="IPR020615">
    <property type="entry name" value="Thiolase_acyl_enz_int_AS"/>
</dbReference>
<dbReference type="InterPro" id="IPR020610">
    <property type="entry name" value="Thiolase_AS"/>
</dbReference>
<dbReference type="InterPro" id="IPR020617">
    <property type="entry name" value="Thiolase_C"/>
</dbReference>
<dbReference type="InterPro" id="IPR020613">
    <property type="entry name" value="Thiolase_CS"/>
</dbReference>
<dbReference type="InterPro" id="IPR020616">
    <property type="entry name" value="Thiolase_N"/>
</dbReference>
<dbReference type="NCBIfam" id="TIGR01930">
    <property type="entry name" value="AcCoA-C-Actrans"/>
    <property type="match status" value="1"/>
</dbReference>
<dbReference type="PANTHER" id="PTHR18919:SF107">
    <property type="entry name" value="ACETYL-COA ACETYLTRANSFERASE, CYTOSOLIC"/>
    <property type="match status" value="1"/>
</dbReference>
<dbReference type="PANTHER" id="PTHR18919">
    <property type="entry name" value="ACETYL-COA C-ACYLTRANSFERASE"/>
    <property type="match status" value="1"/>
</dbReference>
<dbReference type="Pfam" id="PF02803">
    <property type="entry name" value="Thiolase_C"/>
    <property type="match status" value="1"/>
</dbReference>
<dbReference type="Pfam" id="PF00108">
    <property type="entry name" value="Thiolase_N"/>
    <property type="match status" value="1"/>
</dbReference>
<dbReference type="PIRSF" id="PIRSF000429">
    <property type="entry name" value="Ac-CoA_Ac_transf"/>
    <property type="match status" value="1"/>
</dbReference>
<dbReference type="SUPFAM" id="SSF53901">
    <property type="entry name" value="Thiolase-like"/>
    <property type="match status" value="2"/>
</dbReference>
<dbReference type="PROSITE" id="PS00098">
    <property type="entry name" value="THIOLASE_1"/>
    <property type="match status" value="1"/>
</dbReference>
<dbReference type="PROSITE" id="PS00737">
    <property type="entry name" value="THIOLASE_2"/>
    <property type="match status" value="1"/>
</dbReference>
<dbReference type="PROSITE" id="PS00099">
    <property type="entry name" value="THIOLASE_3"/>
    <property type="match status" value="1"/>
</dbReference>